<name>RL5_BACHK</name>
<evidence type="ECO:0000255" key="1">
    <source>
        <dbReference type="HAMAP-Rule" id="MF_01333"/>
    </source>
</evidence>
<evidence type="ECO:0000305" key="2"/>
<gene>
    <name evidence="1" type="primary">rplE</name>
    <name type="ordered locus">BT9727_0118</name>
</gene>
<proteinExistence type="inferred from homology"/>
<comment type="function">
    <text evidence="1">This is one of the proteins that bind and probably mediate the attachment of the 5S RNA into the large ribosomal subunit, where it forms part of the central protuberance. In the 70S ribosome it contacts protein S13 of the 30S subunit (bridge B1b), connecting the 2 subunits; this bridge is implicated in subunit movement. Contacts the P site tRNA; the 5S rRNA and some of its associated proteins might help stabilize positioning of ribosome-bound tRNAs.</text>
</comment>
<comment type="subunit">
    <text evidence="1">Part of the 50S ribosomal subunit; part of the 5S rRNA/L5/L18/L25 subcomplex. Contacts the 5S rRNA and the P site tRNA. Forms a bridge to the 30S subunit in the 70S ribosome.</text>
</comment>
<comment type="similarity">
    <text evidence="1">Belongs to the universal ribosomal protein uL5 family.</text>
</comment>
<organism>
    <name type="scientific">Bacillus thuringiensis subsp. konkukian (strain 97-27)</name>
    <dbReference type="NCBI Taxonomy" id="281309"/>
    <lineage>
        <taxon>Bacteria</taxon>
        <taxon>Bacillati</taxon>
        <taxon>Bacillota</taxon>
        <taxon>Bacilli</taxon>
        <taxon>Bacillales</taxon>
        <taxon>Bacillaceae</taxon>
        <taxon>Bacillus</taxon>
        <taxon>Bacillus cereus group</taxon>
    </lineage>
</organism>
<protein>
    <recommendedName>
        <fullName evidence="1">Large ribosomal subunit protein uL5</fullName>
    </recommendedName>
    <alternativeName>
        <fullName evidence="2">50S ribosomal protein L5</fullName>
    </alternativeName>
</protein>
<keyword id="KW-0687">Ribonucleoprotein</keyword>
<keyword id="KW-0689">Ribosomal protein</keyword>
<keyword id="KW-0694">RNA-binding</keyword>
<keyword id="KW-0699">rRNA-binding</keyword>
<keyword id="KW-0820">tRNA-binding</keyword>
<feature type="chain" id="PRO_0000242968" description="Large ribosomal subunit protein uL5">
    <location>
        <begin position="1"/>
        <end position="179"/>
    </location>
</feature>
<reference key="1">
    <citation type="journal article" date="2006" name="J. Bacteriol.">
        <title>Pathogenomic sequence analysis of Bacillus cereus and Bacillus thuringiensis isolates closely related to Bacillus anthracis.</title>
        <authorList>
            <person name="Han C.S."/>
            <person name="Xie G."/>
            <person name="Challacombe J.F."/>
            <person name="Altherr M.R."/>
            <person name="Bhotika S.S."/>
            <person name="Bruce D."/>
            <person name="Campbell C.S."/>
            <person name="Campbell M.L."/>
            <person name="Chen J."/>
            <person name="Chertkov O."/>
            <person name="Cleland C."/>
            <person name="Dimitrijevic M."/>
            <person name="Doggett N.A."/>
            <person name="Fawcett J.J."/>
            <person name="Glavina T."/>
            <person name="Goodwin L.A."/>
            <person name="Hill K.K."/>
            <person name="Hitchcock P."/>
            <person name="Jackson P.J."/>
            <person name="Keim P."/>
            <person name="Kewalramani A.R."/>
            <person name="Longmire J."/>
            <person name="Lucas S."/>
            <person name="Malfatti S."/>
            <person name="McMurry K."/>
            <person name="Meincke L.J."/>
            <person name="Misra M."/>
            <person name="Moseman B.L."/>
            <person name="Mundt M."/>
            <person name="Munk A.C."/>
            <person name="Okinaka R.T."/>
            <person name="Parson-Quintana B."/>
            <person name="Reilly L.P."/>
            <person name="Richardson P."/>
            <person name="Robinson D.L."/>
            <person name="Rubin E."/>
            <person name="Saunders E."/>
            <person name="Tapia R."/>
            <person name="Tesmer J.G."/>
            <person name="Thayer N."/>
            <person name="Thompson L.S."/>
            <person name="Tice H."/>
            <person name="Ticknor L.O."/>
            <person name="Wills P.L."/>
            <person name="Brettin T.S."/>
            <person name="Gilna P."/>
        </authorList>
    </citation>
    <scope>NUCLEOTIDE SEQUENCE [LARGE SCALE GENOMIC DNA]</scope>
    <source>
        <strain>97-27</strain>
    </source>
</reference>
<accession>Q6HPP6</accession>
<dbReference type="EMBL" id="AE017355">
    <property type="protein sequence ID" value="AAT63872.1"/>
    <property type="molecule type" value="Genomic_DNA"/>
</dbReference>
<dbReference type="RefSeq" id="WP_001080831.1">
    <property type="nucleotide sequence ID" value="NC_005957.1"/>
</dbReference>
<dbReference type="RefSeq" id="YP_034474.1">
    <property type="nucleotide sequence ID" value="NC_005957.1"/>
</dbReference>
<dbReference type="SMR" id="Q6HPP6"/>
<dbReference type="GeneID" id="93010931"/>
<dbReference type="KEGG" id="btk:BT9727_0118"/>
<dbReference type="PATRIC" id="fig|281309.8.peg.119"/>
<dbReference type="HOGENOM" id="CLU_061015_2_1_9"/>
<dbReference type="Proteomes" id="UP000001301">
    <property type="component" value="Chromosome"/>
</dbReference>
<dbReference type="GO" id="GO:1990904">
    <property type="term" value="C:ribonucleoprotein complex"/>
    <property type="evidence" value="ECO:0007669"/>
    <property type="project" value="UniProtKB-KW"/>
</dbReference>
<dbReference type="GO" id="GO:0005840">
    <property type="term" value="C:ribosome"/>
    <property type="evidence" value="ECO:0007669"/>
    <property type="project" value="UniProtKB-KW"/>
</dbReference>
<dbReference type="GO" id="GO:0019843">
    <property type="term" value="F:rRNA binding"/>
    <property type="evidence" value="ECO:0007669"/>
    <property type="project" value="UniProtKB-UniRule"/>
</dbReference>
<dbReference type="GO" id="GO:0003735">
    <property type="term" value="F:structural constituent of ribosome"/>
    <property type="evidence" value="ECO:0007669"/>
    <property type="project" value="InterPro"/>
</dbReference>
<dbReference type="GO" id="GO:0000049">
    <property type="term" value="F:tRNA binding"/>
    <property type="evidence" value="ECO:0007669"/>
    <property type="project" value="UniProtKB-UniRule"/>
</dbReference>
<dbReference type="GO" id="GO:0006412">
    <property type="term" value="P:translation"/>
    <property type="evidence" value="ECO:0007669"/>
    <property type="project" value="UniProtKB-UniRule"/>
</dbReference>
<dbReference type="FunFam" id="3.30.1440.10:FF:000001">
    <property type="entry name" value="50S ribosomal protein L5"/>
    <property type="match status" value="1"/>
</dbReference>
<dbReference type="Gene3D" id="3.30.1440.10">
    <property type="match status" value="1"/>
</dbReference>
<dbReference type="HAMAP" id="MF_01333_B">
    <property type="entry name" value="Ribosomal_uL5_B"/>
    <property type="match status" value="1"/>
</dbReference>
<dbReference type="InterPro" id="IPR002132">
    <property type="entry name" value="Ribosomal_uL5"/>
</dbReference>
<dbReference type="InterPro" id="IPR020930">
    <property type="entry name" value="Ribosomal_uL5_bac-type"/>
</dbReference>
<dbReference type="InterPro" id="IPR031309">
    <property type="entry name" value="Ribosomal_uL5_C"/>
</dbReference>
<dbReference type="InterPro" id="IPR020929">
    <property type="entry name" value="Ribosomal_uL5_CS"/>
</dbReference>
<dbReference type="InterPro" id="IPR022803">
    <property type="entry name" value="Ribosomal_uL5_dom_sf"/>
</dbReference>
<dbReference type="InterPro" id="IPR031310">
    <property type="entry name" value="Ribosomal_uL5_N"/>
</dbReference>
<dbReference type="NCBIfam" id="NF000585">
    <property type="entry name" value="PRK00010.1"/>
    <property type="match status" value="1"/>
</dbReference>
<dbReference type="PANTHER" id="PTHR11994">
    <property type="entry name" value="60S RIBOSOMAL PROTEIN L11-RELATED"/>
    <property type="match status" value="1"/>
</dbReference>
<dbReference type="Pfam" id="PF00281">
    <property type="entry name" value="Ribosomal_L5"/>
    <property type="match status" value="1"/>
</dbReference>
<dbReference type="Pfam" id="PF00673">
    <property type="entry name" value="Ribosomal_L5_C"/>
    <property type="match status" value="1"/>
</dbReference>
<dbReference type="PIRSF" id="PIRSF002161">
    <property type="entry name" value="Ribosomal_L5"/>
    <property type="match status" value="1"/>
</dbReference>
<dbReference type="SUPFAM" id="SSF55282">
    <property type="entry name" value="RL5-like"/>
    <property type="match status" value="1"/>
</dbReference>
<dbReference type="PROSITE" id="PS00358">
    <property type="entry name" value="RIBOSOMAL_L5"/>
    <property type="match status" value="1"/>
</dbReference>
<sequence>MNRLKEKFQKEITPALVSKFNYKSVMQVPKIEKIVINTGVGDAVSNSKALDNAVEELTQITGQKPVVTRAKKSIAGFRLREGMPIGAKVTLRGEQMYEFFDKLVSVSLPRVRDFRGVSKKSFDGRGNYTLGVKEQLIFPEIDYDKVSKVRGMDIVIVTTAKTDEEARELLTQFGMPFQK</sequence>